<organism>
    <name type="scientific">Burkholderia pseudomallei (strain K96243)</name>
    <dbReference type="NCBI Taxonomy" id="272560"/>
    <lineage>
        <taxon>Bacteria</taxon>
        <taxon>Pseudomonadati</taxon>
        <taxon>Pseudomonadota</taxon>
        <taxon>Betaproteobacteria</taxon>
        <taxon>Burkholderiales</taxon>
        <taxon>Burkholderiaceae</taxon>
        <taxon>Burkholderia</taxon>
        <taxon>pseudomallei group</taxon>
    </lineage>
</organism>
<comment type="function">
    <text evidence="1">This protein specifically catalyzes the removal of signal peptides from prolipoproteins.</text>
</comment>
<comment type="catalytic activity">
    <reaction evidence="1">
        <text>Release of signal peptides from bacterial membrane prolipoproteins. Hydrolyzes -Xaa-Yaa-Zaa-|-(S,diacylglyceryl)Cys-, in which Xaa is hydrophobic (preferably Leu), and Yaa (Ala or Ser) and Zaa (Gly or Ala) have small, neutral side chains.</text>
        <dbReference type="EC" id="3.4.23.36"/>
    </reaction>
</comment>
<comment type="pathway">
    <text evidence="1">Protein modification; lipoprotein biosynthesis (signal peptide cleavage).</text>
</comment>
<comment type="subcellular location">
    <subcellularLocation>
        <location evidence="1">Cell inner membrane</location>
        <topology evidence="1">Multi-pass membrane protein</topology>
    </subcellularLocation>
</comment>
<comment type="similarity">
    <text evidence="1">Belongs to the peptidase A8 family.</text>
</comment>
<proteinExistence type="inferred from homology"/>
<evidence type="ECO:0000255" key="1">
    <source>
        <dbReference type="HAMAP-Rule" id="MF_00161"/>
    </source>
</evidence>
<name>LSPA_BURPS</name>
<sequence>MAKTLSKSSGGALAPWLGISLIVILFDQLTKIAVLKTFAYGAMHALTPFFNLTLIYNRGAAFGFLATAGGWQRWAFTALGIGATLVICYLLKRHGHQRLFSLSLALILGGALGNVIDRLIYGHVIDFLDFHVGAWHWPAFNLADSAITVGAVLLIYDELRRVRGAR</sequence>
<gene>
    <name evidence="1" type="primary">lspA</name>
    <name type="ordered locus">BPSL0905</name>
</gene>
<protein>
    <recommendedName>
        <fullName evidence="1">Lipoprotein signal peptidase</fullName>
        <ecNumber evidence="1">3.4.23.36</ecNumber>
    </recommendedName>
    <alternativeName>
        <fullName evidence="1">Prolipoprotein signal peptidase</fullName>
    </alternativeName>
    <alternativeName>
        <fullName evidence="1">Signal peptidase II</fullName>
        <shortName evidence="1">SPase II</shortName>
    </alternativeName>
</protein>
<reference key="1">
    <citation type="journal article" date="2004" name="Proc. Natl. Acad. Sci. U.S.A.">
        <title>Genomic plasticity of the causative agent of melioidosis, Burkholderia pseudomallei.</title>
        <authorList>
            <person name="Holden M.T.G."/>
            <person name="Titball R.W."/>
            <person name="Peacock S.J."/>
            <person name="Cerdeno-Tarraga A.-M."/>
            <person name="Atkins T."/>
            <person name="Crossman L.C."/>
            <person name="Pitt T."/>
            <person name="Churcher C."/>
            <person name="Mungall K.L."/>
            <person name="Bentley S.D."/>
            <person name="Sebaihia M."/>
            <person name="Thomson N.R."/>
            <person name="Bason N."/>
            <person name="Beacham I.R."/>
            <person name="Brooks K."/>
            <person name="Brown K.A."/>
            <person name="Brown N.F."/>
            <person name="Challis G.L."/>
            <person name="Cherevach I."/>
            <person name="Chillingworth T."/>
            <person name="Cronin A."/>
            <person name="Crossett B."/>
            <person name="Davis P."/>
            <person name="DeShazer D."/>
            <person name="Feltwell T."/>
            <person name="Fraser A."/>
            <person name="Hance Z."/>
            <person name="Hauser H."/>
            <person name="Holroyd S."/>
            <person name="Jagels K."/>
            <person name="Keith K.E."/>
            <person name="Maddison M."/>
            <person name="Moule S."/>
            <person name="Price C."/>
            <person name="Quail M.A."/>
            <person name="Rabbinowitsch E."/>
            <person name="Rutherford K."/>
            <person name="Sanders M."/>
            <person name="Simmonds M."/>
            <person name="Songsivilai S."/>
            <person name="Stevens K."/>
            <person name="Tumapa S."/>
            <person name="Vesaratchavest M."/>
            <person name="Whitehead S."/>
            <person name="Yeats C."/>
            <person name="Barrell B.G."/>
            <person name="Oyston P.C.F."/>
            <person name="Parkhill J."/>
        </authorList>
    </citation>
    <scope>NUCLEOTIDE SEQUENCE [LARGE SCALE GENOMIC DNA]</scope>
    <source>
        <strain>K96243</strain>
    </source>
</reference>
<keyword id="KW-0064">Aspartyl protease</keyword>
<keyword id="KW-0997">Cell inner membrane</keyword>
<keyword id="KW-1003">Cell membrane</keyword>
<keyword id="KW-0378">Hydrolase</keyword>
<keyword id="KW-0472">Membrane</keyword>
<keyword id="KW-0645">Protease</keyword>
<keyword id="KW-1185">Reference proteome</keyword>
<keyword id="KW-0812">Transmembrane</keyword>
<keyword id="KW-1133">Transmembrane helix</keyword>
<dbReference type="EC" id="3.4.23.36" evidence="1"/>
<dbReference type="EMBL" id="BX571965">
    <property type="protein sequence ID" value="CAH34899.1"/>
    <property type="molecule type" value="Genomic_DNA"/>
</dbReference>
<dbReference type="RefSeq" id="WP_004186086.1">
    <property type="nucleotide sequence ID" value="NZ_CP009538.1"/>
</dbReference>
<dbReference type="RefSeq" id="YP_107532.1">
    <property type="nucleotide sequence ID" value="NC_006350.1"/>
</dbReference>
<dbReference type="SMR" id="Q63WI4"/>
<dbReference type="STRING" id="272560.BPSL0905"/>
<dbReference type="GeneID" id="93059418"/>
<dbReference type="KEGG" id="bps:BPSL0905"/>
<dbReference type="PATRIC" id="fig|272560.51.peg.677"/>
<dbReference type="eggNOG" id="COG0597">
    <property type="taxonomic scope" value="Bacteria"/>
</dbReference>
<dbReference type="UniPathway" id="UPA00665"/>
<dbReference type="Proteomes" id="UP000000605">
    <property type="component" value="Chromosome 1"/>
</dbReference>
<dbReference type="GO" id="GO:0005886">
    <property type="term" value="C:plasma membrane"/>
    <property type="evidence" value="ECO:0007669"/>
    <property type="project" value="UniProtKB-SubCell"/>
</dbReference>
<dbReference type="GO" id="GO:0004190">
    <property type="term" value="F:aspartic-type endopeptidase activity"/>
    <property type="evidence" value="ECO:0007669"/>
    <property type="project" value="UniProtKB-UniRule"/>
</dbReference>
<dbReference type="GO" id="GO:0006508">
    <property type="term" value="P:proteolysis"/>
    <property type="evidence" value="ECO:0007669"/>
    <property type="project" value="UniProtKB-KW"/>
</dbReference>
<dbReference type="HAMAP" id="MF_00161">
    <property type="entry name" value="LspA"/>
    <property type="match status" value="1"/>
</dbReference>
<dbReference type="InterPro" id="IPR001872">
    <property type="entry name" value="Peptidase_A8"/>
</dbReference>
<dbReference type="NCBIfam" id="TIGR00077">
    <property type="entry name" value="lspA"/>
    <property type="match status" value="1"/>
</dbReference>
<dbReference type="PANTHER" id="PTHR33695">
    <property type="entry name" value="LIPOPROTEIN SIGNAL PEPTIDASE"/>
    <property type="match status" value="1"/>
</dbReference>
<dbReference type="PANTHER" id="PTHR33695:SF1">
    <property type="entry name" value="LIPOPROTEIN SIGNAL PEPTIDASE"/>
    <property type="match status" value="1"/>
</dbReference>
<dbReference type="Pfam" id="PF01252">
    <property type="entry name" value="Peptidase_A8"/>
    <property type="match status" value="1"/>
</dbReference>
<dbReference type="PRINTS" id="PR00781">
    <property type="entry name" value="LIPOSIGPTASE"/>
</dbReference>
<dbReference type="PROSITE" id="PS00855">
    <property type="entry name" value="SPASE_II"/>
    <property type="match status" value="1"/>
</dbReference>
<accession>Q63WI4</accession>
<feature type="chain" id="PRO_1000038792" description="Lipoprotein signal peptidase">
    <location>
        <begin position="1"/>
        <end position="166"/>
    </location>
</feature>
<feature type="transmembrane region" description="Helical" evidence="1">
    <location>
        <begin position="10"/>
        <end position="30"/>
    </location>
</feature>
<feature type="transmembrane region" description="Helical" evidence="1">
    <location>
        <begin position="32"/>
        <end position="52"/>
    </location>
</feature>
<feature type="transmembrane region" description="Helical" evidence="1">
    <location>
        <begin position="71"/>
        <end position="91"/>
    </location>
</feature>
<feature type="transmembrane region" description="Helical" evidence="1">
    <location>
        <begin position="100"/>
        <end position="120"/>
    </location>
</feature>
<feature type="transmembrane region" description="Helical" evidence="1">
    <location>
        <begin position="135"/>
        <end position="155"/>
    </location>
</feature>
<feature type="active site" evidence="1">
    <location>
        <position position="126"/>
    </location>
</feature>
<feature type="active site" evidence="1">
    <location>
        <position position="144"/>
    </location>
</feature>